<keyword id="KW-0027">Amidation</keyword>
<keyword id="KW-0903">Direct protein sequencing</keyword>
<keyword id="KW-0527">Neuropeptide</keyword>
<keyword id="KW-0964">Secreted</keyword>
<accession>P41517</accession>
<proteinExistence type="evidence at protein level"/>
<organism>
    <name type="scientific">Calliphora vomitoria</name>
    <name type="common">Blue bottle fly</name>
    <name type="synonym">Musca vomitoria</name>
    <dbReference type="NCBI Taxonomy" id="27454"/>
    <lineage>
        <taxon>Eukaryota</taxon>
        <taxon>Metazoa</taxon>
        <taxon>Ecdysozoa</taxon>
        <taxon>Arthropoda</taxon>
        <taxon>Hexapoda</taxon>
        <taxon>Insecta</taxon>
        <taxon>Pterygota</taxon>
        <taxon>Neoptera</taxon>
        <taxon>Endopterygota</taxon>
        <taxon>Diptera</taxon>
        <taxon>Brachycera</taxon>
        <taxon>Muscomorpha</taxon>
        <taxon>Oestroidea</taxon>
        <taxon>Calliphoridae</taxon>
        <taxon>Calliphorinae</taxon>
        <taxon>Calliphora</taxon>
    </lineage>
</organism>
<sequence length="9" mass="981">APTAFYGVR</sequence>
<dbReference type="GO" id="GO:0005576">
    <property type="term" value="C:extracellular region"/>
    <property type="evidence" value="ECO:0007669"/>
    <property type="project" value="UniProtKB-SubCell"/>
</dbReference>
<dbReference type="GO" id="GO:0007218">
    <property type="term" value="P:neuropeptide signaling pathway"/>
    <property type="evidence" value="ECO:0007669"/>
    <property type="project" value="UniProtKB-KW"/>
</dbReference>
<feature type="peptide" id="PRO_0000044436" description="Callitachykinin-1">
    <location>
        <begin position="1"/>
        <end position="9"/>
    </location>
</feature>
<feature type="modified residue" description="Arginine amide" evidence="1">
    <location>
        <position position="9"/>
    </location>
</feature>
<evidence type="ECO:0000269" key="1">
    <source>
    </source>
</evidence>
<protein>
    <recommendedName>
        <fullName>Callitachykinin-1</fullName>
    </recommendedName>
    <alternativeName>
        <fullName>Callitachykinin I</fullName>
    </alternativeName>
</protein>
<comment type="function">
    <text>Myoactive peptide.</text>
</comment>
<comment type="subcellular location">
    <subcellularLocation>
        <location>Secreted</location>
    </subcellularLocation>
</comment>
<name>TKC1_CALVO</name>
<reference key="1">
    <citation type="journal article" date="1994" name="Peptides">
        <title>Callitachykinin I and II, two novel myotropic peptides isolated from the blowfly, Calliphora vomitoria, that have resemblances to tachykinins.</title>
        <authorList>
            <person name="Lundquist C.T."/>
            <person name="Clottens F.L."/>
            <person name="Holman G.M."/>
            <person name="Nichols R."/>
            <person name="Nachman R.J."/>
            <person name="Naessel D.R."/>
        </authorList>
    </citation>
    <scope>PROTEIN SEQUENCE</scope>
    <scope>AMIDATION AT ARG-9</scope>
    <scope>SYNTHESIS</scope>
</reference>